<evidence type="ECO:0000250" key="1">
    <source>
        <dbReference type="UniProtKB" id="P34913"/>
    </source>
</evidence>
<evidence type="ECO:0000250" key="2">
    <source>
        <dbReference type="UniProtKB" id="P95276"/>
    </source>
</evidence>
<evidence type="ECO:0000255" key="3"/>
<evidence type="ECO:0000269" key="4">
    <source>
    </source>
</evidence>
<evidence type="ECO:0000303" key="5">
    <source>
    </source>
</evidence>
<evidence type="ECO:0000305" key="6"/>
<evidence type="ECO:0000305" key="7">
    <source>
    </source>
</evidence>
<name>EPH3_SIRGR</name>
<dbReference type="EC" id="3.3.2.10" evidence="4"/>
<dbReference type="EC" id="3.3.2.-" evidence="4"/>
<dbReference type="SMR" id="P0DO70"/>
<dbReference type="UniPathway" id="UPA00213"/>
<dbReference type="GO" id="GO:0016787">
    <property type="term" value="F:hydrolase activity"/>
    <property type="evidence" value="ECO:0007669"/>
    <property type="project" value="UniProtKB-KW"/>
</dbReference>
<dbReference type="FunFam" id="3.40.50.1820:FF:000161">
    <property type="entry name" value="Epoxide hydrolase"/>
    <property type="match status" value="1"/>
</dbReference>
<dbReference type="Gene3D" id="3.40.50.1820">
    <property type="entry name" value="alpha/beta hydrolase"/>
    <property type="match status" value="1"/>
</dbReference>
<dbReference type="InterPro" id="IPR000073">
    <property type="entry name" value="AB_hydrolase_1"/>
</dbReference>
<dbReference type="InterPro" id="IPR029058">
    <property type="entry name" value="AB_hydrolase_fold"/>
</dbReference>
<dbReference type="InterPro" id="IPR000639">
    <property type="entry name" value="Epox_hydrolase-like"/>
</dbReference>
<dbReference type="PANTHER" id="PTHR43329">
    <property type="entry name" value="EPOXIDE HYDROLASE"/>
    <property type="match status" value="1"/>
</dbReference>
<dbReference type="Pfam" id="PF00561">
    <property type="entry name" value="Abhydrolase_1"/>
    <property type="match status" value="1"/>
</dbReference>
<dbReference type="PRINTS" id="PR00111">
    <property type="entry name" value="ABHYDROLASE"/>
</dbReference>
<dbReference type="PRINTS" id="PR00412">
    <property type="entry name" value="EPOXHYDRLASE"/>
</dbReference>
<dbReference type="SUPFAM" id="SSF53474">
    <property type="entry name" value="alpha/beta-Hydrolases"/>
    <property type="match status" value="1"/>
</dbReference>
<sequence length="316" mass="35631">MDQIEHITINTNGIKMHIASVGTGPVVLLLHGFPELWYSWRHQLLYLSSVGYRAIAPDLRGYGDTDSPASPTSYTALHIVGDLVGALDELGIEKVFLVGHDWGAIIAWYFCLFRPDRIKALVNLSVQFIPRNPAIPFIEGFRTAFGDDFYMCRFQVPGEAEEDFASIDTAQLFKTSLCNRSSAPPCLPKEIGFRAIPPPENLPSWLTEEDINYYAAKFKQTGFTGALNYYRAFDLTWELTAPWTGAQIQVPVKFIVGDSDLTYHFPGAKEYIHNGGFKKDVPLLEEVVVVKDACHFINQERPQEINAHIHDFINKF</sequence>
<reference key="1">
    <citation type="journal article" date="2016" name="Proc. Natl. Acad. Sci. U.S.A.">
        <title>The biosynthetic pathway of the nonsugar, high-intensity sweetener mogroside V from Siraitia grosvenorii.</title>
        <authorList>
            <person name="Itkin M."/>
            <person name="Davidovich-Rikanati R."/>
            <person name="Cohen S."/>
            <person name="Portnoy V."/>
            <person name="Doron-Faigenboim A."/>
            <person name="Oren E."/>
            <person name="Freilich S."/>
            <person name="Tzuri G."/>
            <person name="Baranes N."/>
            <person name="Shen S."/>
            <person name="Petreikov M."/>
            <person name="Sertchook R."/>
            <person name="Ben-Dor S."/>
            <person name="Gottlieb H."/>
            <person name="Hernandez A."/>
            <person name="Nelson D.R."/>
            <person name="Paris H.S."/>
            <person name="Tadmor Y."/>
            <person name="Burger Y."/>
            <person name="Lewinsohn E."/>
            <person name="Katzir N."/>
            <person name="Schaffer A."/>
        </authorList>
    </citation>
    <scope>NUCLEOTIDE SEQUENCE</scope>
    <scope>FUNCTION</scope>
    <scope>CATALYTIC ACTIVITY</scope>
    <scope>PATHWAY</scope>
    <scope>TISSUE SPECIFICITY</scope>
    <scope>GENE FAMILY</scope>
    <scope>NOMENCLATURE</scope>
</reference>
<gene>
    <name evidence="5" type="primary">EPH3</name>
</gene>
<accession>P0DO70</accession>
<comment type="function">
    <text evidence="4">Epoxide hydrolase involved in the biosynthesis of cucurbitacin and mogroside tetracyclic triterpene natural products (e.g. siamenoside I and mogrosides IV, V and VI) (PubMed:27821754). Cucurbitacins have cytotoxic properties and exhibit deterrent taste as a defense barrier against herbivores (PubMed:27821754). Mogrosides are nonsugar highly oxygenated compounds used as high-intensity zero-calorie sweeteners; they also possess pharmacological properties such as regulating immunity, lowering blood sugar and lipid levels, protecting the liver, and acting as antioxidants and antitumor agents (PubMed:27821754). Catalyzes the hydrolysis of aromatic epoxide-containing substrates, such as the conversion of 24,25-epoxycucurbitadienol to 24,25-dihydroxycucurbitadienol (PubMed:27821754).</text>
</comment>
<comment type="catalytic activity">
    <reaction evidence="4">
        <text>an epoxide + H2O = an ethanediol</text>
        <dbReference type="Rhea" id="RHEA:19037"/>
        <dbReference type="ChEBI" id="CHEBI:15377"/>
        <dbReference type="ChEBI" id="CHEBI:32955"/>
        <dbReference type="ChEBI" id="CHEBI:140594"/>
        <dbReference type="EC" id="3.3.2.10"/>
    </reaction>
    <physiologicalReaction direction="left-to-right" evidence="4">
        <dbReference type="Rhea" id="RHEA:19038"/>
    </physiologicalReaction>
</comment>
<comment type="catalytic activity">
    <reaction evidence="4">
        <text>(24S)-24,25-epoxycucurbitadienol + H2O = (24R)-24,25-dihydroxycucurbitadienol</text>
        <dbReference type="Rhea" id="RHEA:81855"/>
        <dbReference type="ChEBI" id="CHEBI:15377"/>
        <dbReference type="ChEBI" id="CHEBI:229949"/>
        <dbReference type="ChEBI" id="CHEBI:229950"/>
    </reaction>
    <physiologicalReaction direction="left-to-right" evidence="4">
        <dbReference type="Rhea" id="RHEA:81856"/>
    </physiologicalReaction>
</comment>
<comment type="pathway">
    <text evidence="4">Secondary metabolite biosynthesis; terpenoid biosynthesis.</text>
</comment>
<comment type="subunit">
    <text evidence="2">Homodimer.</text>
</comment>
<comment type="tissue specificity">
    <text evidence="4">Highly expressed in young fruits 15 days after anthesis (15-DAA).</text>
</comment>
<comment type="miscellaneous">
    <text evidence="7">Mogrosides, the major active constituents of S.grosvenorii fruits, are a mixture of cucurbitane-type triterpenoid glycosides that have been proven to be powerful and zero-caloric sweeteners and can hence be used as a sucrose substitute for diabetic and obese patients.</text>
</comment>
<comment type="similarity">
    <text evidence="6">Belongs to the AB hydrolase superfamily. Epoxide hydrolase family.</text>
</comment>
<keyword id="KW-0378">Hydrolase</keyword>
<protein>
    <recommendedName>
        <fullName evidence="5">Epoxide hydrolase 3</fullName>
        <shortName evidence="5">SgEPH3</shortName>
        <ecNumber evidence="4">3.3.2.10</ecNumber>
    </recommendedName>
    <alternativeName>
        <fullName evidence="6">24,25-dihydroxycucurbitadienol synthase EPH3</fullName>
        <ecNumber evidence="4">3.3.2.-</ecNumber>
    </alternativeName>
</protein>
<proteinExistence type="evidence at protein level"/>
<organism>
    <name type="scientific">Siraitia grosvenorii</name>
    <name type="common">Monk's fruit</name>
    <name type="synonym">Luo han guo</name>
    <dbReference type="NCBI Taxonomy" id="190515"/>
    <lineage>
        <taxon>Eukaryota</taxon>
        <taxon>Viridiplantae</taxon>
        <taxon>Streptophyta</taxon>
        <taxon>Embryophyta</taxon>
        <taxon>Tracheophyta</taxon>
        <taxon>Spermatophyta</taxon>
        <taxon>Magnoliopsida</taxon>
        <taxon>eudicotyledons</taxon>
        <taxon>Gunneridae</taxon>
        <taxon>Pentapetalae</taxon>
        <taxon>rosids</taxon>
        <taxon>fabids</taxon>
        <taxon>Cucurbitales</taxon>
        <taxon>Cucurbitaceae</taxon>
        <taxon>Siraitieae</taxon>
        <taxon>Siraitia</taxon>
    </lineage>
</organism>
<feature type="chain" id="PRO_0000460917" description="Epoxide hydrolase 3">
    <location>
        <begin position="1"/>
        <end position="316"/>
    </location>
</feature>
<feature type="domain" description="AB hydrolase-1" evidence="3">
    <location>
        <begin position="25"/>
        <end position="302"/>
    </location>
</feature>
<feature type="active site" description="Nucleophile" evidence="1">
    <location>
        <position position="101"/>
    </location>
</feature>
<feature type="active site" description="Proton donor" evidence="1">
    <location>
        <position position="230"/>
    </location>
</feature>
<feature type="active site" description="Proton acceptor" evidence="1">
    <location>
        <position position="295"/>
    </location>
</feature>
<feature type="binding site" evidence="1">
    <location>
        <position position="150"/>
    </location>
    <ligand>
        <name>an epoxide</name>
        <dbReference type="ChEBI" id="CHEBI:32955"/>
    </ligand>
</feature>
<feature type="site" description="Contributes to the formation of an oxyanion binding site for the epoxide oxygen of substrate" evidence="2">
    <location>
        <position position="150"/>
    </location>
</feature>
<feature type="site" description="Contributes to the formation of an oxyanion binding site for the epoxide oxygen of substrate" evidence="2">
    <location>
        <position position="230"/>
    </location>
</feature>